<keyword id="KW-0056">Arginine metabolism</keyword>
<keyword id="KW-0378">Hydrolase</keyword>
<keyword id="KW-0479">Metal-binding</keyword>
<keyword id="KW-1185">Reference proteome</keyword>
<keyword id="KW-0862">Zinc</keyword>
<reference key="1">
    <citation type="journal article" date="2009" name="PLoS Genet.">
        <title>Organised genome dynamics in the Escherichia coli species results in highly diverse adaptive paths.</title>
        <authorList>
            <person name="Touchon M."/>
            <person name="Hoede C."/>
            <person name="Tenaillon O."/>
            <person name="Barbe V."/>
            <person name="Baeriswyl S."/>
            <person name="Bidet P."/>
            <person name="Bingen E."/>
            <person name="Bonacorsi S."/>
            <person name="Bouchier C."/>
            <person name="Bouvet O."/>
            <person name="Calteau A."/>
            <person name="Chiapello H."/>
            <person name="Clermont O."/>
            <person name="Cruveiller S."/>
            <person name="Danchin A."/>
            <person name="Diard M."/>
            <person name="Dossat C."/>
            <person name="Karoui M.E."/>
            <person name="Frapy E."/>
            <person name="Garry L."/>
            <person name="Ghigo J.M."/>
            <person name="Gilles A.M."/>
            <person name="Johnson J."/>
            <person name="Le Bouguenec C."/>
            <person name="Lescat M."/>
            <person name="Mangenot S."/>
            <person name="Martinez-Jehanne V."/>
            <person name="Matic I."/>
            <person name="Nassif X."/>
            <person name="Oztas S."/>
            <person name="Petit M.A."/>
            <person name="Pichon C."/>
            <person name="Rouy Z."/>
            <person name="Ruf C.S."/>
            <person name="Schneider D."/>
            <person name="Tourret J."/>
            <person name="Vacherie B."/>
            <person name="Vallenet D."/>
            <person name="Medigue C."/>
            <person name="Rocha E.P.C."/>
            <person name="Denamur E."/>
        </authorList>
    </citation>
    <scope>NUCLEOTIDE SEQUENCE [LARGE SCALE GENOMIC DNA]</scope>
    <source>
        <strain>S88 / ExPEC</strain>
    </source>
</reference>
<accession>B7MAV5</accession>
<dbReference type="EC" id="3.5.1.96" evidence="1"/>
<dbReference type="EMBL" id="CU928161">
    <property type="protein sequence ID" value="CAR03104.1"/>
    <property type="molecule type" value="Genomic_DNA"/>
</dbReference>
<dbReference type="RefSeq" id="WP_000368521.1">
    <property type="nucleotide sequence ID" value="NC_011742.1"/>
</dbReference>
<dbReference type="SMR" id="B7MAV5"/>
<dbReference type="KEGG" id="ecz:ECS88_1796"/>
<dbReference type="HOGENOM" id="CLU_071608_0_0_6"/>
<dbReference type="UniPathway" id="UPA00185">
    <property type="reaction ID" value="UER00283"/>
</dbReference>
<dbReference type="Proteomes" id="UP000000747">
    <property type="component" value="Chromosome"/>
</dbReference>
<dbReference type="GO" id="GO:0016788">
    <property type="term" value="F:hydrolase activity, acting on ester bonds"/>
    <property type="evidence" value="ECO:0007669"/>
    <property type="project" value="UniProtKB-UniRule"/>
</dbReference>
<dbReference type="GO" id="GO:0009017">
    <property type="term" value="F:succinylglutamate desuccinylase activity"/>
    <property type="evidence" value="ECO:0007669"/>
    <property type="project" value="UniProtKB-EC"/>
</dbReference>
<dbReference type="GO" id="GO:0008270">
    <property type="term" value="F:zinc ion binding"/>
    <property type="evidence" value="ECO:0007669"/>
    <property type="project" value="UniProtKB-UniRule"/>
</dbReference>
<dbReference type="GO" id="GO:0019544">
    <property type="term" value="P:arginine catabolic process to glutamate"/>
    <property type="evidence" value="ECO:0007669"/>
    <property type="project" value="UniProtKB-UniRule"/>
</dbReference>
<dbReference type="GO" id="GO:0019545">
    <property type="term" value="P:arginine catabolic process to succinate"/>
    <property type="evidence" value="ECO:0007669"/>
    <property type="project" value="UniProtKB-UniRule"/>
</dbReference>
<dbReference type="CDD" id="cd03855">
    <property type="entry name" value="M14_ASTE"/>
    <property type="match status" value="1"/>
</dbReference>
<dbReference type="FunFam" id="3.40.630.10:FF:000017">
    <property type="entry name" value="Succinylglutamate desuccinylase"/>
    <property type="match status" value="1"/>
</dbReference>
<dbReference type="Gene3D" id="3.40.630.10">
    <property type="entry name" value="Zn peptidases"/>
    <property type="match status" value="1"/>
</dbReference>
<dbReference type="HAMAP" id="MF_00767">
    <property type="entry name" value="Arg_catab_AstE"/>
    <property type="match status" value="1"/>
</dbReference>
<dbReference type="InterPro" id="IPR050178">
    <property type="entry name" value="AspA/AstE_fam"/>
</dbReference>
<dbReference type="InterPro" id="IPR055438">
    <property type="entry name" value="AstE_AspA_cat"/>
</dbReference>
<dbReference type="InterPro" id="IPR007036">
    <property type="entry name" value="Aste_AspA_hybrid_dom"/>
</dbReference>
<dbReference type="InterPro" id="IPR016681">
    <property type="entry name" value="SuccinylGlu_desuccinylase"/>
</dbReference>
<dbReference type="NCBIfam" id="TIGR03242">
    <property type="entry name" value="arg_catab_astE"/>
    <property type="match status" value="1"/>
</dbReference>
<dbReference type="NCBIfam" id="NF003706">
    <property type="entry name" value="PRK05324.1"/>
    <property type="match status" value="1"/>
</dbReference>
<dbReference type="PANTHER" id="PTHR15162">
    <property type="entry name" value="ASPARTOACYLASE"/>
    <property type="match status" value="1"/>
</dbReference>
<dbReference type="PANTHER" id="PTHR15162:SF7">
    <property type="entry name" value="SUCCINYLGLUTAMATE DESUCCINYLASE"/>
    <property type="match status" value="1"/>
</dbReference>
<dbReference type="Pfam" id="PF24827">
    <property type="entry name" value="AstE_AspA_cat"/>
    <property type="match status" value="1"/>
</dbReference>
<dbReference type="Pfam" id="PF04952">
    <property type="entry name" value="AstE_AspA_hybrid"/>
    <property type="match status" value="1"/>
</dbReference>
<dbReference type="PIRSF" id="PIRSF017020">
    <property type="entry name" value="AstE"/>
    <property type="match status" value="1"/>
</dbReference>
<dbReference type="SUPFAM" id="SSF53187">
    <property type="entry name" value="Zn-dependent exopeptidases"/>
    <property type="match status" value="1"/>
</dbReference>
<evidence type="ECO:0000255" key="1">
    <source>
        <dbReference type="HAMAP-Rule" id="MF_00767"/>
    </source>
</evidence>
<protein>
    <recommendedName>
        <fullName evidence="1">Succinylglutamate desuccinylase</fullName>
        <ecNumber evidence="1">3.5.1.96</ecNumber>
    </recommendedName>
</protein>
<gene>
    <name evidence="1" type="primary">astE</name>
    <name type="ordered locus">ECS88_1796</name>
</gene>
<feature type="chain" id="PRO_1000133626" description="Succinylglutamate desuccinylase">
    <location>
        <begin position="1"/>
        <end position="322"/>
    </location>
</feature>
<feature type="active site" evidence="1">
    <location>
        <position position="210"/>
    </location>
</feature>
<feature type="binding site" evidence="1">
    <location>
        <position position="53"/>
    </location>
    <ligand>
        <name>Zn(2+)</name>
        <dbReference type="ChEBI" id="CHEBI:29105"/>
    </ligand>
</feature>
<feature type="binding site" evidence="1">
    <location>
        <position position="56"/>
    </location>
    <ligand>
        <name>Zn(2+)</name>
        <dbReference type="ChEBI" id="CHEBI:29105"/>
    </ligand>
</feature>
<feature type="binding site" evidence="1">
    <location>
        <position position="147"/>
    </location>
    <ligand>
        <name>Zn(2+)</name>
        <dbReference type="ChEBI" id="CHEBI:29105"/>
    </ligand>
</feature>
<proteinExistence type="inferred from homology"/>
<organism>
    <name type="scientific">Escherichia coli O45:K1 (strain S88 / ExPEC)</name>
    <dbReference type="NCBI Taxonomy" id="585035"/>
    <lineage>
        <taxon>Bacteria</taxon>
        <taxon>Pseudomonadati</taxon>
        <taxon>Pseudomonadota</taxon>
        <taxon>Gammaproteobacteria</taxon>
        <taxon>Enterobacterales</taxon>
        <taxon>Enterobacteriaceae</taxon>
        <taxon>Escherichia</taxon>
    </lineage>
</organism>
<comment type="function">
    <text evidence="1">Transforms N(2)-succinylglutamate into succinate and glutamate.</text>
</comment>
<comment type="catalytic activity">
    <reaction evidence="1">
        <text>N-succinyl-L-glutamate + H2O = L-glutamate + succinate</text>
        <dbReference type="Rhea" id="RHEA:15169"/>
        <dbReference type="ChEBI" id="CHEBI:15377"/>
        <dbReference type="ChEBI" id="CHEBI:29985"/>
        <dbReference type="ChEBI" id="CHEBI:30031"/>
        <dbReference type="ChEBI" id="CHEBI:58763"/>
        <dbReference type="EC" id="3.5.1.96"/>
    </reaction>
</comment>
<comment type="cofactor">
    <cofactor evidence="1">
        <name>Zn(2+)</name>
        <dbReference type="ChEBI" id="CHEBI:29105"/>
    </cofactor>
    <text evidence="1">Binds 1 zinc ion per subunit.</text>
</comment>
<comment type="pathway">
    <text evidence="1">Amino-acid degradation; L-arginine degradation via AST pathway; L-glutamate and succinate from L-arginine: step 5/5.</text>
</comment>
<comment type="similarity">
    <text evidence="1">Belongs to the AspA/AstE family. Succinylglutamate desuccinylase subfamily.</text>
</comment>
<sequence length="322" mass="35855">MDNFLALTLTGKKPVITEREINGVRWRWLGDGVLELTPLTPPQGVLVISAGIHGNETAPVEMLDALLGAISHGEIPLRWRLLVILGNPPALKQGKRYCHSDMNRMFGGRWQLFAESGETCRARELEQCLEDFYDQGKESVRWHLDLHTAIRGSLHPQFGVLPQRDIPWDEKFLTWLGAAGLEALVFHQEPGGTFTHFSARHFGALACTLELGKALPFGQNDLRQFAVTASAIAALLSGESVGIVRTPPLRYRVVSQITRHSPSFEMHMANDTLNFMPFEKGTLLAQDGEERFTVTHDVEYVLFPNPLVALGLRAGLMLEKIS</sequence>
<name>ASTE_ECO45</name>